<name>RUVB_NITV4</name>
<gene>
    <name evidence="1" type="primary">ruvB</name>
    <name type="ordered locus">Dvul_0989</name>
</gene>
<comment type="function">
    <text evidence="1">The RuvA-RuvB-RuvC complex processes Holliday junction (HJ) DNA during genetic recombination and DNA repair, while the RuvA-RuvB complex plays an important role in the rescue of blocked DNA replication forks via replication fork reversal (RFR). RuvA specifically binds to HJ cruciform DNA, conferring on it an open structure. The RuvB hexamer acts as an ATP-dependent pump, pulling dsDNA into and through the RuvAB complex. RuvB forms 2 homohexamers on either side of HJ DNA bound by 1 or 2 RuvA tetramers; 4 subunits per hexamer contact DNA at a time. Coordinated motions by a converter formed by DNA-disengaged RuvB subunits stimulates ATP hydrolysis and nucleotide exchange. Immobilization of the converter enables RuvB to convert the ATP-contained energy into a lever motion, pulling 2 nucleotides of DNA out of the RuvA tetramer per ATP hydrolyzed, thus driving DNA branch migration. The RuvB motors rotate together with the DNA substrate, which together with the progressing nucleotide cycle form the mechanistic basis for DNA recombination by continuous HJ branch migration. Branch migration allows RuvC to scan DNA until it finds its consensus sequence, where it cleaves and resolves cruciform DNA.</text>
</comment>
<comment type="catalytic activity">
    <reaction evidence="1">
        <text>ATP + H2O = ADP + phosphate + H(+)</text>
        <dbReference type="Rhea" id="RHEA:13065"/>
        <dbReference type="ChEBI" id="CHEBI:15377"/>
        <dbReference type="ChEBI" id="CHEBI:15378"/>
        <dbReference type="ChEBI" id="CHEBI:30616"/>
        <dbReference type="ChEBI" id="CHEBI:43474"/>
        <dbReference type="ChEBI" id="CHEBI:456216"/>
    </reaction>
</comment>
<comment type="subunit">
    <text evidence="1">Homohexamer. Forms an RuvA(8)-RuvB(12)-Holliday junction (HJ) complex. HJ DNA is sandwiched between 2 RuvA tetramers; dsDNA enters through RuvA and exits via RuvB. An RuvB hexamer assembles on each DNA strand where it exits the tetramer. Each RuvB hexamer is contacted by two RuvA subunits (via domain III) on 2 adjacent RuvB subunits; this complex drives branch migration. In the full resolvosome a probable DNA-RuvA(4)-RuvB(12)-RuvC(2) complex forms which resolves the HJ.</text>
</comment>
<comment type="subcellular location">
    <subcellularLocation>
        <location evidence="1">Cytoplasm</location>
    </subcellularLocation>
</comment>
<comment type="domain">
    <text evidence="1">Has 3 domains, the large (RuvB-L) and small ATPase (RuvB-S) domains and the C-terminal head (RuvB-H) domain. The head domain binds DNA, while the ATPase domains jointly bind ATP, ADP or are empty depending on the state of the subunit in the translocation cycle. During a single DNA translocation step the structure of each domain remains the same, but their relative positions change.</text>
</comment>
<comment type="similarity">
    <text evidence="1">Belongs to the RuvB family.</text>
</comment>
<dbReference type="EC" id="3.6.4.-" evidence="1"/>
<dbReference type="EMBL" id="CP000527">
    <property type="protein sequence ID" value="ABM28010.1"/>
    <property type="molecule type" value="Genomic_DNA"/>
</dbReference>
<dbReference type="RefSeq" id="WP_010939530.1">
    <property type="nucleotide sequence ID" value="NC_008751.1"/>
</dbReference>
<dbReference type="SMR" id="A1VC44"/>
<dbReference type="KEGG" id="dvl:Dvul_0989"/>
<dbReference type="HOGENOM" id="CLU_055599_1_0_7"/>
<dbReference type="Proteomes" id="UP000009173">
    <property type="component" value="Chromosome"/>
</dbReference>
<dbReference type="GO" id="GO:0005737">
    <property type="term" value="C:cytoplasm"/>
    <property type="evidence" value="ECO:0007669"/>
    <property type="project" value="UniProtKB-SubCell"/>
</dbReference>
<dbReference type="GO" id="GO:0048476">
    <property type="term" value="C:Holliday junction resolvase complex"/>
    <property type="evidence" value="ECO:0007669"/>
    <property type="project" value="UniProtKB-UniRule"/>
</dbReference>
<dbReference type="GO" id="GO:0005524">
    <property type="term" value="F:ATP binding"/>
    <property type="evidence" value="ECO:0007669"/>
    <property type="project" value="UniProtKB-UniRule"/>
</dbReference>
<dbReference type="GO" id="GO:0016887">
    <property type="term" value="F:ATP hydrolysis activity"/>
    <property type="evidence" value="ECO:0007669"/>
    <property type="project" value="InterPro"/>
</dbReference>
<dbReference type="GO" id="GO:0000400">
    <property type="term" value="F:four-way junction DNA binding"/>
    <property type="evidence" value="ECO:0007669"/>
    <property type="project" value="UniProtKB-UniRule"/>
</dbReference>
<dbReference type="GO" id="GO:0009378">
    <property type="term" value="F:four-way junction helicase activity"/>
    <property type="evidence" value="ECO:0007669"/>
    <property type="project" value="InterPro"/>
</dbReference>
<dbReference type="GO" id="GO:0006310">
    <property type="term" value="P:DNA recombination"/>
    <property type="evidence" value="ECO:0007669"/>
    <property type="project" value="UniProtKB-UniRule"/>
</dbReference>
<dbReference type="GO" id="GO:0006281">
    <property type="term" value="P:DNA repair"/>
    <property type="evidence" value="ECO:0007669"/>
    <property type="project" value="UniProtKB-UniRule"/>
</dbReference>
<dbReference type="CDD" id="cd00009">
    <property type="entry name" value="AAA"/>
    <property type="match status" value="1"/>
</dbReference>
<dbReference type="Gene3D" id="1.10.8.60">
    <property type="match status" value="1"/>
</dbReference>
<dbReference type="Gene3D" id="3.40.50.300">
    <property type="entry name" value="P-loop containing nucleotide triphosphate hydrolases"/>
    <property type="match status" value="1"/>
</dbReference>
<dbReference type="Gene3D" id="1.10.10.10">
    <property type="entry name" value="Winged helix-like DNA-binding domain superfamily/Winged helix DNA-binding domain"/>
    <property type="match status" value="1"/>
</dbReference>
<dbReference type="HAMAP" id="MF_00016">
    <property type="entry name" value="DNA_HJ_migration_RuvB"/>
    <property type="match status" value="1"/>
</dbReference>
<dbReference type="InterPro" id="IPR003593">
    <property type="entry name" value="AAA+_ATPase"/>
</dbReference>
<dbReference type="InterPro" id="IPR041445">
    <property type="entry name" value="AAA_lid_4"/>
</dbReference>
<dbReference type="InterPro" id="IPR004605">
    <property type="entry name" value="DNA_helicase_Holl-junc_RuvB"/>
</dbReference>
<dbReference type="InterPro" id="IPR027417">
    <property type="entry name" value="P-loop_NTPase"/>
</dbReference>
<dbReference type="InterPro" id="IPR008824">
    <property type="entry name" value="RuvB-like_N"/>
</dbReference>
<dbReference type="InterPro" id="IPR008823">
    <property type="entry name" value="RuvB_C"/>
</dbReference>
<dbReference type="InterPro" id="IPR036388">
    <property type="entry name" value="WH-like_DNA-bd_sf"/>
</dbReference>
<dbReference type="InterPro" id="IPR036390">
    <property type="entry name" value="WH_DNA-bd_sf"/>
</dbReference>
<dbReference type="NCBIfam" id="NF000868">
    <property type="entry name" value="PRK00080.1"/>
    <property type="match status" value="1"/>
</dbReference>
<dbReference type="NCBIfam" id="TIGR00635">
    <property type="entry name" value="ruvB"/>
    <property type="match status" value="1"/>
</dbReference>
<dbReference type="PANTHER" id="PTHR42848">
    <property type="match status" value="1"/>
</dbReference>
<dbReference type="PANTHER" id="PTHR42848:SF1">
    <property type="entry name" value="HOLLIDAY JUNCTION BRANCH MIGRATION COMPLEX SUBUNIT RUVB"/>
    <property type="match status" value="1"/>
</dbReference>
<dbReference type="Pfam" id="PF17864">
    <property type="entry name" value="AAA_lid_4"/>
    <property type="match status" value="1"/>
</dbReference>
<dbReference type="Pfam" id="PF05491">
    <property type="entry name" value="RuvB_C"/>
    <property type="match status" value="1"/>
</dbReference>
<dbReference type="Pfam" id="PF05496">
    <property type="entry name" value="RuvB_N"/>
    <property type="match status" value="1"/>
</dbReference>
<dbReference type="SMART" id="SM00382">
    <property type="entry name" value="AAA"/>
    <property type="match status" value="1"/>
</dbReference>
<dbReference type="SUPFAM" id="SSF52540">
    <property type="entry name" value="P-loop containing nucleoside triphosphate hydrolases"/>
    <property type="match status" value="1"/>
</dbReference>
<dbReference type="SUPFAM" id="SSF46785">
    <property type="entry name" value="Winged helix' DNA-binding domain"/>
    <property type="match status" value="1"/>
</dbReference>
<sequence length="320" mass="35085">MTANVCLDESVRPRLLDDFIGQDELRANMRVYLDAARERGQAMDHVLFYGNPGLGKTTLAQIMAGELGVNLVSTSGPVLERSGDLAAILTNLGRHDLLFVDEIHRMPIAVEEVLYPAMEDFKLDLVIGQGPGARTVKIDVEPFTLVGATTRIGLLSSPLRDRFGIISRLEYYTPADLARIVARTARIIGANLTEEGAIEIGRRARGTPRIANRLLRRVRDFATVHAGGVISADLASEALGRMEVDESGLDQMDRKLLEVLIEHYGGGPVGIKTLAVACAEEVRTIEDIYEPYLIQCGFLKRTPRGRVATAKAYRHLNLLG</sequence>
<protein>
    <recommendedName>
        <fullName evidence="1">Holliday junction branch migration complex subunit RuvB</fullName>
        <ecNumber evidence="1">3.6.4.-</ecNumber>
    </recommendedName>
</protein>
<proteinExistence type="inferred from homology"/>
<evidence type="ECO:0000255" key="1">
    <source>
        <dbReference type="HAMAP-Rule" id="MF_00016"/>
    </source>
</evidence>
<accession>A1VC44</accession>
<organism>
    <name type="scientific">Nitratidesulfovibrio vulgaris (strain DP4)</name>
    <name type="common">Desulfovibrio vulgaris</name>
    <dbReference type="NCBI Taxonomy" id="391774"/>
    <lineage>
        <taxon>Bacteria</taxon>
        <taxon>Pseudomonadati</taxon>
        <taxon>Thermodesulfobacteriota</taxon>
        <taxon>Desulfovibrionia</taxon>
        <taxon>Desulfovibrionales</taxon>
        <taxon>Desulfovibrionaceae</taxon>
        <taxon>Nitratidesulfovibrio</taxon>
    </lineage>
</organism>
<keyword id="KW-0067">ATP-binding</keyword>
<keyword id="KW-0963">Cytoplasm</keyword>
<keyword id="KW-0227">DNA damage</keyword>
<keyword id="KW-0233">DNA recombination</keyword>
<keyword id="KW-0234">DNA repair</keyword>
<keyword id="KW-0238">DNA-binding</keyword>
<keyword id="KW-0378">Hydrolase</keyword>
<keyword id="KW-0547">Nucleotide-binding</keyword>
<reference key="1">
    <citation type="journal article" date="2009" name="Environ. Microbiol.">
        <title>Contribution of mobile genetic elements to Desulfovibrio vulgaris genome plasticity.</title>
        <authorList>
            <person name="Walker C.B."/>
            <person name="Stolyar S."/>
            <person name="Chivian D."/>
            <person name="Pinel N."/>
            <person name="Gabster J.A."/>
            <person name="Dehal P.S."/>
            <person name="He Z."/>
            <person name="Yang Z.K."/>
            <person name="Yen H.C."/>
            <person name="Zhou J."/>
            <person name="Wall J.D."/>
            <person name="Hazen T.C."/>
            <person name="Arkin A.P."/>
            <person name="Stahl D.A."/>
        </authorList>
    </citation>
    <scope>NUCLEOTIDE SEQUENCE [LARGE SCALE GENOMIC DNA]</scope>
    <source>
        <strain>DP4</strain>
    </source>
</reference>
<feature type="chain" id="PRO_1000001397" description="Holliday junction branch migration complex subunit RuvB">
    <location>
        <begin position="1"/>
        <end position="320"/>
    </location>
</feature>
<feature type="region of interest" description="Large ATPase domain (RuvB-L)" evidence="1">
    <location>
        <begin position="1"/>
        <end position="172"/>
    </location>
</feature>
<feature type="region of interest" description="Small ATPAse domain (RuvB-S)" evidence="1">
    <location>
        <begin position="173"/>
        <end position="243"/>
    </location>
</feature>
<feature type="region of interest" description="Head domain (RuvB-H)" evidence="1">
    <location>
        <begin position="246"/>
        <end position="320"/>
    </location>
</feature>
<feature type="binding site" evidence="1">
    <location>
        <position position="12"/>
    </location>
    <ligand>
        <name>ATP</name>
        <dbReference type="ChEBI" id="CHEBI:30616"/>
    </ligand>
</feature>
<feature type="binding site" evidence="1">
    <location>
        <position position="53"/>
    </location>
    <ligand>
        <name>ATP</name>
        <dbReference type="ChEBI" id="CHEBI:30616"/>
    </ligand>
</feature>
<feature type="binding site" evidence="1">
    <location>
        <position position="56"/>
    </location>
    <ligand>
        <name>ATP</name>
        <dbReference type="ChEBI" id="CHEBI:30616"/>
    </ligand>
</feature>
<feature type="binding site" evidence="1">
    <location>
        <position position="57"/>
    </location>
    <ligand>
        <name>ATP</name>
        <dbReference type="ChEBI" id="CHEBI:30616"/>
    </ligand>
</feature>
<feature type="binding site" evidence="1">
    <location>
        <position position="57"/>
    </location>
    <ligand>
        <name>Mg(2+)</name>
        <dbReference type="ChEBI" id="CHEBI:18420"/>
    </ligand>
</feature>
<feature type="binding site" evidence="1">
    <location>
        <position position="58"/>
    </location>
    <ligand>
        <name>ATP</name>
        <dbReference type="ChEBI" id="CHEBI:30616"/>
    </ligand>
</feature>
<feature type="binding site" evidence="1">
    <location>
        <begin position="119"/>
        <end position="121"/>
    </location>
    <ligand>
        <name>ATP</name>
        <dbReference type="ChEBI" id="CHEBI:30616"/>
    </ligand>
</feature>
<feature type="binding site" evidence="1">
    <location>
        <position position="162"/>
    </location>
    <ligand>
        <name>ATP</name>
        <dbReference type="ChEBI" id="CHEBI:30616"/>
    </ligand>
</feature>
<feature type="binding site" evidence="1">
    <location>
        <position position="172"/>
    </location>
    <ligand>
        <name>ATP</name>
        <dbReference type="ChEBI" id="CHEBI:30616"/>
    </ligand>
</feature>
<feature type="binding site" evidence="1">
    <location>
        <position position="209"/>
    </location>
    <ligand>
        <name>ATP</name>
        <dbReference type="ChEBI" id="CHEBI:30616"/>
    </ligand>
</feature>
<feature type="binding site" evidence="1">
    <location>
        <position position="301"/>
    </location>
    <ligand>
        <name>DNA</name>
        <dbReference type="ChEBI" id="CHEBI:16991"/>
    </ligand>
</feature>
<feature type="binding site" evidence="1">
    <location>
        <position position="306"/>
    </location>
    <ligand>
        <name>DNA</name>
        <dbReference type="ChEBI" id="CHEBI:16991"/>
    </ligand>
</feature>